<accession>A8FMG2</accession>
<name>LFTR_CAMJ8</name>
<comment type="function">
    <text evidence="1">Functions in the N-end rule pathway of protein degradation where it conjugates Leu, Phe and, less efficiently, Met from aminoacyl-tRNAs to the N-termini of proteins containing an N-terminal arginine or lysine.</text>
</comment>
<comment type="catalytic activity">
    <reaction evidence="1">
        <text>N-terminal L-lysyl-[protein] + L-leucyl-tRNA(Leu) = N-terminal L-leucyl-L-lysyl-[protein] + tRNA(Leu) + H(+)</text>
        <dbReference type="Rhea" id="RHEA:12340"/>
        <dbReference type="Rhea" id="RHEA-COMP:9613"/>
        <dbReference type="Rhea" id="RHEA-COMP:9622"/>
        <dbReference type="Rhea" id="RHEA-COMP:12670"/>
        <dbReference type="Rhea" id="RHEA-COMP:12671"/>
        <dbReference type="ChEBI" id="CHEBI:15378"/>
        <dbReference type="ChEBI" id="CHEBI:65249"/>
        <dbReference type="ChEBI" id="CHEBI:78442"/>
        <dbReference type="ChEBI" id="CHEBI:78494"/>
        <dbReference type="ChEBI" id="CHEBI:133043"/>
        <dbReference type="EC" id="2.3.2.6"/>
    </reaction>
</comment>
<comment type="catalytic activity">
    <reaction evidence="1">
        <text>N-terminal L-arginyl-[protein] + L-leucyl-tRNA(Leu) = N-terminal L-leucyl-L-arginyl-[protein] + tRNA(Leu) + H(+)</text>
        <dbReference type="Rhea" id="RHEA:50416"/>
        <dbReference type="Rhea" id="RHEA-COMP:9613"/>
        <dbReference type="Rhea" id="RHEA-COMP:9622"/>
        <dbReference type="Rhea" id="RHEA-COMP:12672"/>
        <dbReference type="Rhea" id="RHEA-COMP:12673"/>
        <dbReference type="ChEBI" id="CHEBI:15378"/>
        <dbReference type="ChEBI" id="CHEBI:64719"/>
        <dbReference type="ChEBI" id="CHEBI:78442"/>
        <dbReference type="ChEBI" id="CHEBI:78494"/>
        <dbReference type="ChEBI" id="CHEBI:133044"/>
        <dbReference type="EC" id="2.3.2.6"/>
    </reaction>
</comment>
<comment type="catalytic activity">
    <reaction evidence="1">
        <text>L-phenylalanyl-tRNA(Phe) + an N-terminal L-alpha-aminoacyl-[protein] = an N-terminal L-phenylalanyl-L-alpha-aminoacyl-[protein] + tRNA(Phe)</text>
        <dbReference type="Rhea" id="RHEA:43632"/>
        <dbReference type="Rhea" id="RHEA-COMP:9668"/>
        <dbReference type="Rhea" id="RHEA-COMP:9699"/>
        <dbReference type="Rhea" id="RHEA-COMP:10636"/>
        <dbReference type="Rhea" id="RHEA-COMP:10637"/>
        <dbReference type="ChEBI" id="CHEBI:78442"/>
        <dbReference type="ChEBI" id="CHEBI:78531"/>
        <dbReference type="ChEBI" id="CHEBI:78597"/>
        <dbReference type="ChEBI" id="CHEBI:83561"/>
        <dbReference type="EC" id="2.3.2.6"/>
    </reaction>
</comment>
<comment type="subcellular location">
    <subcellularLocation>
        <location evidence="1">Cytoplasm</location>
    </subcellularLocation>
</comment>
<comment type="similarity">
    <text evidence="1">Belongs to the L/F-transferase family.</text>
</comment>
<proteinExistence type="inferred from homology"/>
<dbReference type="EC" id="2.3.2.6" evidence="1"/>
<dbReference type="EMBL" id="CP000814">
    <property type="protein sequence ID" value="ABV52649.1"/>
    <property type="molecule type" value="Genomic_DNA"/>
</dbReference>
<dbReference type="RefSeq" id="WP_002826100.1">
    <property type="nucleotide sequence ID" value="NC_009839.1"/>
</dbReference>
<dbReference type="SMR" id="A8FMG2"/>
<dbReference type="KEGG" id="cju:C8J_1050"/>
<dbReference type="HOGENOM" id="CLU_075045_0_1_7"/>
<dbReference type="GO" id="GO:0005737">
    <property type="term" value="C:cytoplasm"/>
    <property type="evidence" value="ECO:0007669"/>
    <property type="project" value="UniProtKB-SubCell"/>
</dbReference>
<dbReference type="GO" id="GO:0008914">
    <property type="term" value="F:leucyl-tRNA--protein transferase activity"/>
    <property type="evidence" value="ECO:0007669"/>
    <property type="project" value="UniProtKB-UniRule"/>
</dbReference>
<dbReference type="GO" id="GO:0030163">
    <property type="term" value="P:protein catabolic process"/>
    <property type="evidence" value="ECO:0007669"/>
    <property type="project" value="UniProtKB-UniRule"/>
</dbReference>
<dbReference type="Gene3D" id="3.40.630.70">
    <property type="entry name" value="Leucyl/phenylalanyl-tRNA-protein transferase, C-terminal domain"/>
    <property type="match status" value="1"/>
</dbReference>
<dbReference type="Gene3D" id="3.30.70.3550">
    <property type="entry name" value="Leucyl/phenylalanyl-tRNA-protein transferase, N-terminal domain"/>
    <property type="match status" value="1"/>
</dbReference>
<dbReference type="HAMAP" id="MF_00688">
    <property type="entry name" value="Leu_Phe_trans"/>
    <property type="match status" value="1"/>
</dbReference>
<dbReference type="InterPro" id="IPR016181">
    <property type="entry name" value="Acyl_CoA_acyltransferase"/>
</dbReference>
<dbReference type="InterPro" id="IPR004616">
    <property type="entry name" value="Leu/Phe-tRNA_Trfase"/>
</dbReference>
<dbReference type="InterPro" id="IPR042203">
    <property type="entry name" value="Leu/Phe-tRNA_Trfase_C"/>
</dbReference>
<dbReference type="InterPro" id="IPR042221">
    <property type="entry name" value="Leu/Phe-tRNA_Trfase_N"/>
</dbReference>
<dbReference type="NCBIfam" id="TIGR00667">
    <property type="entry name" value="aat"/>
    <property type="match status" value="1"/>
</dbReference>
<dbReference type="PANTHER" id="PTHR30098">
    <property type="entry name" value="LEUCYL/PHENYLALANYL-TRNA--PROTEIN TRANSFERASE"/>
    <property type="match status" value="1"/>
</dbReference>
<dbReference type="PANTHER" id="PTHR30098:SF2">
    <property type="entry name" value="LEUCYL_PHENYLALANYL-TRNA--PROTEIN TRANSFERASE"/>
    <property type="match status" value="1"/>
</dbReference>
<dbReference type="Pfam" id="PF03588">
    <property type="entry name" value="Leu_Phe_trans"/>
    <property type="match status" value="1"/>
</dbReference>
<dbReference type="SUPFAM" id="SSF55729">
    <property type="entry name" value="Acyl-CoA N-acyltransferases (Nat)"/>
    <property type="match status" value="1"/>
</dbReference>
<protein>
    <recommendedName>
        <fullName evidence="1">Leucyl/phenylalanyl-tRNA--protein transferase</fullName>
        <ecNumber evidence="1">2.3.2.6</ecNumber>
    </recommendedName>
    <alternativeName>
        <fullName evidence="1">L/F-transferase</fullName>
    </alternativeName>
    <alternativeName>
        <fullName evidence="1">Leucyltransferase</fullName>
    </alternativeName>
    <alternativeName>
        <fullName evidence="1">Phenyalanyltransferase</fullName>
    </alternativeName>
</protein>
<evidence type="ECO:0000255" key="1">
    <source>
        <dbReference type="HAMAP-Rule" id="MF_00688"/>
    </source>
</evidence>
<gene>
    <name evidence="1" type="primary">aat</name>
    <name type="ordered locus">C8J_1050</name>
</gene>
<keyword id="KW-0012">Acyltransferase</keyword>
<keyword id="KW-0963">Cytoplasm</keyword>
<keyword id="KW-0808">Transferase</keyword>
<feature type="chain" id="PRO_1000072738" description="Leucyl/phenylalanyl-tRNA--protein transferase">
    <location>
        <begin position="1"/>
        <end position="215"/>
    </location>
</feature>
<sequence>MESSNLYSKLLNAPKNAPVFLSQNLEADFIVKAYTFGLFPWTSKPVTWWCPDPRCILIPNQIHIQKNMKKFINLYQIKLDYDFLKLITLCRDTRSQSWIDDEFITTYYKLFTQGYAHSLELYENNELIGGIYGLILGKVFFGESMVSIKKNASKVAMIKLCDLLKPYDFIIDCQVYNQHLEFMGAHNISRKEFLNILKEKCNQESGFKNFKDLIT</sequence>
<reference key="1">
    <citation type="journal article" date="2007" name="J. Bacteriol.">
        <title>The complete genome sequence of Campylobacter jejuni strain 81116 (NCTC11828).</title>
        <authorList>
            <person name="Pearson B.M."/>
            <person name="Gaskin D.J.H."/>
            <person name="Segers R.P.A.M."/>
            <person name="Wells J.M."/>
            <person name="Nuijten P.J.M."/>
            <person name="van Vliet A.H.M."/>
        </authorList>
    </citation>
    <scope>NUCLEOTIDE SEQUENCE [LARGE SCALE GENOMIC DNA]</scope>
    <source>
        <strain>81116 / NCTC 11828</strain>
    </source>
</reference>
<organism>
    <name type="scientific">Campylobacter jejuni subsp. jejuni serotype O:6 (strain 81116 / NCTC 11828)</name>
    <dbReference type="NCBI Taxonomy" id="407148"/>
    <lineage>
        <taxon>Bacteria</taxon>
        <taxon>Pseudomonadati</taxon>
        <taxon>Campylobacterota</taxon>
        <taxon>Epsilonproteobacteria</taxon>
        <taxon>Campylobacterales</taxon>
        <taxon>Campylobacteraceae</taxon>
        <taxon>Campylobacter</taxon>
    </lineage>
</organism>